<name>RLMN_HYPNA</name>
<keyword id="KW-0004">4Fe-4S</keyword>
<keyword id="KW-0963">Cytoplasm</keyword>
<keyword id="KW-1015">Disulfide bond</keyword>
<keyword id="KW-0408">Iron</keyword>
<keyword id="KW-0411">Iron-sulfur</keyword>
<keyword id="KW-0479">Metal-binding</keyword>
<keyword id="KW-0489">Methyltransferase</keyword>
<keyword id="KW-1185">Reference proteome</keyword>
<keyword id="KW-0698">rRNA processing</keyword>
<keyword id="KW-0949">S-adenosyl-L-methionine</keyword>
<keyword id="KW-0808">Transferase</keyword>
<keyword id="KW-0819">tRNA processing</keyword>
<sequence>MTVTLNLSRPNSALPGKKRLTGLSVPALKAEMEALGLEPKAANMRARQIRRWIHHFGTTDFAAMTDIAKDLRAQLAEKFEVERPEIADHQVSRDGTQKWLTRYGPGIEGESVYIPDVGKAGALCVSSQVGCTLNCTFCHTGTQALVRNLTAAEIVQQVIIARDALSEWPSSIEERRLTNIVFMGMGEPLYNLDNVAEAIDTISDGDGMAIGRRRITVSTAGVAPKIPELGERTGAMLAISLHATNNDLRNELVPLNRKYDIQTLFDAIRAYPGLGNAKRVTFEYVMLKGINDTLAEARDLVKLMKGVPSKINLIPFNPWPGSPYECSDWETIEEFAEVLNRAGYASPIRTPRGRDILAACGQLRSESVKVRASELRKQQASAEGAES</sequence>
<gene>
    <name evidence="1" type="primary">rlmN</name>
    <name type="ordered locus">HNE_3331</name>
</gene>
<accession>Q0BWY9</accession>
<evidence type="ECO:0000255" key="1">
    <source>
        <dbReference type="HAMAP-Rule" id="MF_01849"/>
    </source>
</evidence>
<evidence type="ECO:0000255" key="2">
    <source>
        <dbReference type="PROSITE-ProRule" id="PRU01266"/>
    </source>
</evidence>
<comment type="function">
    <text evidence="1">Specifically methylates position 2 of adenine 2503 in 23S rRNA and position 2 of adenine 37 in tRNAs. m2A2503 modification seems to play a crucial role in the proofreading step occurring at the peptidyl transferase center and thus would serve to optimize ribosomal fidelity.</text>
</comment>
<comment type="catalytic activity">
    <reaction evidence="1">
        <text>adenosine(2503) in 23S rRNA + 2 reduced [2Fe-2S]-[ferredoxin] + 2 S-adenosyl-L-methionine = 2-methyladenosine(2503) in 23S rRNA + 5'-deoxyadenosine + L-methionine + 2 oxidized [2Fe-2S]-[ferredoxin] + S-adenosyl-L-homocysteine</text>
        <dbReference type="Rhea" id="RHEA:42916"/>
        <dbReference type="Rhea" id="RHEA-COMP:10000"/>
        <dbReference type="Rhea" id="RHEA-COMP:10001"/>
        <dbReference type="Rhea" id="RHEA-COMP:10152"/>
        <dbReference type="Rhea" id="RHEA-COMP:10282"/>
        <dbReference type="ChEBI" id="CHEBI:17319"/>
        <dbReference type="ChEBI" id="CHEBI:33737"/>
        <dbReference type="ChEBI" id="CHEBI:33738"/>
        <dbReference type="ChEBI" id="CHEBI:57844"/>
        <dbReference type="ChEBI" id="CHEBI:57856"/>
        <dbReference type="ChEBI" id="CHEBI:59789"/>
        <dbReference type="ChEBI" id="CHEBI:74411"/>
        <dbReference type="ChEBI" id="CHEBI:74497"/>
        <dbReference type="EC" id="2.1.1.192"/>
    </reaction>
</comment>
<comment type="catalytic activity">
    <reaction evidence="1">
        <text>adenosine(37) in tRNA + 2 reduced [2Fe-2S]-[ferredoxin] + 2 S-adenosyl-L-methionine = 2-methyladenosine(37) in tRNA + 5'-deoxyadenosine + L-methionine + 2 oxidized [2Fe-2S]-[ferredoxin] + S-adenosyl-L-homocysteine</text>
        <dbReference type="Rhea" id="RHEA:43332"/>
        <dbReference type="Rhea" id="RHEA-COMP:10000"/>
        <dbReference type="Rhea" id="RHEA-COMP:10001"/>
        <dbReference type="Rhea" id="RHEA-COMP:10162"/>
        <dbReference type="Rhea" id="RHEA-COMP:10485"/>
        <dbReference type="ChEBI" id="CHEBI:17319"/>
        <dbReference type="ChEBI" id="CHEBI:33737"/>
        <dbReference type="ChEBI" id="CHEBI:33738"/>
        <dbReference type="ChEBI" id="CHEBI:57844"/>
        <dbReference type="ChEBI" id="CHEBI:57856"/>
        <dbReference type="ChEBI" id="CHEBI:59789"/>
        <dbReference type="ChEBI" id="CHEBI:74411"/>
        <dbReference type="ChEBI" id="CHEBI:74497"/>
        <dbReference type="EC" id="2.1.1.192"/>
    </reaction>
</comment>
<comment type="cofactor">
    <cofactor evidence="1">
        <name>[4Fe-4S] cluster</name>
        <dbReference type="ChEBI" id="CHEBI:49883"/>
    </cofactor>
    <text evidence="1">Binds 1 [4Fe-4S] cluster. The cluster is coordinated with 3 cysteines and an exchangeable S-adenosyl-L-methionine.</text>
</comment>
<comment type="subcellular location">
    <subcellularLocation>
        <location evidence="1">Cytoplasm</location>
    </subcellularLocation>
</comment>
<comment type="miscellaneous">
    <text evidence="1">Reaction proceeds by a ping-pong mechanism involving intermediate methylation of a conserved cysteine residue.</text>
</comment>
<comment type="similarity">
    <text evidence="1">Belongs to the radical SAM superfamily. RlmN family.</text>
</comment>
<proteinExistence type="inferred from homology"/>
<reference key="1">
    <citation type="journal article" date="2006" name="J. Bacteriol.">
        <title>Comparative genomic evidence for a close relationship between the dimorphic prosthecate bacteria Hyphomonas neptunium and Caulobacter crescentus.</title>
        <authorList>
            <person name="Badger J.H."/>
            <person name="Hoover T.R."/>
            <person name="Brun Y.V."/>
            <person name="Weiner R.M."/>
            <person name="Laub M.T."/>
            <person name="Alexandre G."/>
            <person name="Mrazek J."/>
            <person name="Ren Q."/>
            <person name="Paulsen I.T."/>
            <person name="Nelson K.E."/>
            <person name="Khouri H.M."/>
            <person name="Radune D."/>
            <person name="Sosa J."/>
            <person name="Dodson R.J."/>
            <person name="Sullivan S.A."/>
            <person name="Rosovitz M.J."/>
            <person name="Madupu R."/>
            <person name="Brinkac L.M."/>
            <person name="Durkin A.S."/>
            <person name="Daugherty S.C."/>
            <person name="Kothari S.P."/>
            <person name="Giglio M.G."/>
            <person name="Zhou L."/>
            <person name="Haft D.H."/>
            <person name="Selengut J.D."/>
            <person name="Davidsen T.M."/>
            <person name="Yang Q."/>
            <person name="Zafar N."/>
            <person name="Ward N.L."/>
        </authorList>
    </citation>
    <scope>NUCLEOTIDE SEQUENCE [LARGE SCALE GENOMIC DNA]</scope>
    <source>
        <strain>ATCC 15444</strain>
    </source>
</reference>
<dbReference type="EC" id="2.1.1.192" evidence="1"/>
<dbReference type="EMBL" id="CP000158">
    <property type="protein sequence ID" value="ABI75651.1"/>
    <property type="molecule type" value="Genomic_DNA"/>
</dbReference>
<dbReference type="RefSeq" id="WP_011648299.1">
    <property type="nucleotide sequence ID" value="NC_008358.1"/>
</dbReference>
<dbReference type="SMR" id="Q0BWY9"/>
<dbReference type="STRING" id="228405.HNE_3331"/>
<dbReference type="KEGG" id="hne:HNE_3331"/>
<dbReference type="eggNOG" id="COG0820">
    <property type="taxonomic scope" value="Bacteria"/>
</dbReference>
<dbReference type="HOGENOM" id="CLU_029101_2_0_5"/>
<dbReference type="Proteomes" id="UP000001959">
    <property type="component" value="Chromosome"/>
</dbReference>
<dbReference type="GO" id="GO:0005737">
    <property type="term" value="C:cytoplasm"/>
    <property type="evidence" value="ECO:0007669"/>
    <property type="project" value="UniProtKB-SubCell"/>
</dbReference>
<dbReference type="GO" id="GO:0051539">
    <property type="term" value="F:4 iron, 4 sulfur cluster binding"/>
    <property type="evidence" value="ECO:0007669"/>
    <property type="project" value="UniProtKB-UniRule"/>
</dbReference>
<dbReference type="GO" id="GO:0046872">
    <property type="term" value="F:metal ion binding"/>
    <property type="evidence" value="ECO:0007669"/>
    <property type="project" value="UniProtKB-KW"/>
</dbReference>
<dbReference type="GO" id="GO:0070040">
    <property type="term" value="F:rRNA (adenine(2503)-C2-)-methyltransferase activity"/>
    <property type="evidence" value="ECO:0007669"/>
    <property type="project" value="UniProtKB-UniRule"/>
</dbReference>
<dbReference type="GO" id="GO:0019843">
    <property type="term" value="F:rRNA binding"/>
    <property type="evidence" value="ECO:0007669"/>
    <property type="project" value="UniProtKB-UniRule"/>
</dbReference>
<dbReference type="GO" id="GO:0002935">
    <property type="term" value="F:tRNA (adenine(37)-C2)-methyltransferase activity"/>
    <property type="evidence" value="ECO:0007669"/>
    <property type="project" value="UniProtKB-UniRule"/>
</dbReference>
<dbReference type="GO" id="GO:0000049">
    <property type="term" value="F:tRNA binding"/>
    <property type="evidence" value="ECO:0007669"/>
    <property type="project" value="UniProtKB-UniRule"/>
</dbReference>
<dbReference type="GO" id="GO:0070475">
    <property type="term" value="P:rRNA base methylation"/>
    <property type="evidence" value="ECO:0007669"/>
    <property type="project" value="UniProtKB-UniRule"/>
</dbReference>
<dbReference type="GO" id="GO:0030488">
    <property type="term" value="P:tRNA methylation"/>
    <property type="evidence" value="ECO:0007669"/>
    <property type="project" value="UniProtKB-UniRule"/>
</dbReference>
<dbReference type="CDD" id="cd01335">
    <property type="entry name" value="Radical_SAM"/>
    <property type="match status" value="1"/>
</dbReference>
<dbReference type="Gene3D" id="1.10.150.530">
    <property type="match status" value="1"/>
</dbReference>
<dbReference type="Gene3D" id="3.20.20.70">
    <property type="entry name" value="Aldolase class I"/>
    <property type="match status" value="1"/>
</dbReference>
<dbReference type="HAMAP" id="MF_01849">
    <property type="entry name" value="RNA_methyltr_RlmN"/>
    <property type="match status" value="1"/>
</dbReference>
<dbReference type="InterPro" id="IPR013785">
    <property type="entry name" value="Aldolase_TIM"/>
</dbReference>
<dbReference type="InterPro" id="IPR040072">
    <property type="entry name" value="Methyltransferase_A"/>
</dbReference>
<dbReference type="InterPro" id="IPR048641">
    <property type="entry name" value="RlmN_N"/>
</dbReference>
<dbReference type="InterPro" id="IPR027492">
    <property type="entry name" value="RNA_MTrfase_RlmN"/>
</dbReference>
<dbReference type="InterPro" id="IPR004383">
    <property type="entry name" value="rRNA_lsu_MTrfase_RlmN/Cfr"/>
</dbReference>
<dbReference type="InterPro" id="IPR007197">
    <property type="entry name" value="rSAM"/>
</dbReference>
<dbReference type="NCBIfam" id="TIGR00048">
    <property type="entry name" value="rRNA_mod_RlmN"/>
    <property type="match status" value="1"/>
</dbReference>
<dbReference type="PANTHER" id="PTHR30544">
    <property type="entry name" value="23S RRNA METHYLTRANSFERASE"/>
    <property type="match status" value="1"/>
</dbReference>
<dbReference type="PANTHER" id="PTHR30544:SF5">
    <property type="entry name" value="RADICAL SAM CORE DOMAIN-CONTAINING PROTEIN"/>
    <property type="match status" value="1"/>
</dbReference>
<dbReference type="Pfam" id="PF04055">
    <property type="entry name" value="Radical_SAM"/>
    <property type="match status" value="1"/>
</dbReference>
<dbReference type="Pfam" id="PF21016">
    <property type="entry name" value="RlmN_N"/>
    <property type="match status" value="1"/>
</dbReference>
<dbReference type="PIRSF" id="PIRSF006004">
    <property type="entry name" value="CHP00048"/>
    <property type="match status" value="1"/>
</dbReference>
<dbReference type="SFLD" id="SFLDF00275">
    <property type="entry name" value="adenosine_C2_methyltransferase"/>
    <property type="match status" value="1"/>
</dbReference>
<dbReference type="SFLD" id="SFLDG01062">
    <property type="entry name" value="methyltransferase_(Class_A)"/>
    <property type="match status" value="1"/>
</dbReference>
<dbReference type="SUPFAM" id="SSF102114">
    <property type="entry name" value="Radical SAM enzymes"/>
    <property type="match status" value="1"/>
</dbReference>
<dbReference type="PROSITE" id="PS51918">
    <property type="entry name" value="RADICAL_SAM"/>
    <property type="match status" value="1"/>
</dbReference>
<protein>
    <recommendedName>
        <fullName evidence="1">Dual-specificity RNA methyltransferase RlmN</fullName>
        <ecNumber evidence="1">2.1.1.192</ecNumber>
    </recommendedName>
    <alternativeName>
        <fullName evidence="1">23S rRNA (adenine(2503)-C(2))-methyltransferase</fullName>
    </alternativeName>
    <alternativeName>
        <fullName evidence="1">23S rRNA m2A2503 methyltransferase</fullName>
    </alternativeName>
    <alternativeName>
        <fullName evidence="1">Ribosomal RNA large subunit methyltransferase N</fullName>
    </alternativeName>
    <alternativeName>
        <fullName evidence="1">tRNA (adenine(37)-C(2))-methyltransferase</fullName>
    </alternativeName>
    <alternativeName>
        <fullName evidence="1">tRNA m2A37 methyltransferase</fullName>
    </alternativeName>
</protein>
<organism>
    <name type="scientific">Hyphomonas neptunium (strain ATCC 15444)</name>
    <dbReference type="NCBI Taxonomy" id="228405"/>
    <lineage>
        <taxon>Bacteria</taxon>
        <taxon>Pseudomonadati</taxon>
        <taxon>Pseudomonadota</taxon>
        <taxon>Alphaproteobacteria</taxon>
        <taxon>Hyphomonadales</taxon>
        <taxon>Hyphomonadaceae</taxon>
        <taxon>Hyphomonas</taxon>
    </lineage>
</organism>
<feature type="chain" id="PRO_0000350215" description="Dual-specificity RNA methyltransferase RlmN">
    <location>
        <begin position="1"/>
        <end position="387"/>
    </location>
</feature>
<feature type="domain" description="Radical SAM core" evidence="2">
    <location>
        <begin position="117"/>
        <end position="349"/>
    </location>
</feature>
<feature type="active site" description="Proton acceptor" evidence="1">
    <location>
        <position position="110"/>
    </location>
</feature>
<feature type="active site" description="S-methylcysteine intermediate" evidence="1">
    <location>
        <position position="360"/>
    </location>
</feature>
<feature type="binding site" evidence="1">
    <location>
        <position position="131"/>
    </location>
    <ligand>
        <name>[4Fe-4S] cluster</name>
        <dbReference type="ChEBI" id="CHEBI:49883"/>
        <note>4Fe-4S-S-AdoMet</note>
    </ligand>
</feature>
<feature type="binding site" evidence="1">
    <location>
        <position position="135"/>
    </location>
    <ligand>
        <name>[4Fe-4S] cluster</name>
        <dbReference type="ChEBI" id="CHEBI:49883"/>
        <note>4Fe-4S-S-AdoMet</note>
    </ligand>
</feature>
<feature type="binding site" evidence="1">
    <location>
        <position position="138"/>
    </location>
    <ligand>
        <name>[4Fe-4S] cluster</name>
        <dbReference type="ChEBI" id="CHEBI:49883"/>
        <note>4Fe-4S-S-AdoMet</note>
    </ligand>
</feature>
<feature type="binding site" evidence="1">
    <location>
        <begin position="186"/>
        <end position="187"/>
    </location>
    <ligand>
        <name>S-adenosyl-L-methionine</name>
        <dbReference type="ChEBI" id="CHEBI:59789"/>
    </ligand>
</feature>
<feature type="binding site" evidence="1">
    <location>
        <position position="218"/>
    </location>
    <ligand>
        <name>S-adenosyl-L-methionine</name>
        <dbReference type="ChEBI" id="CHEBI:59789"/>
    </ligand>
</feature>
<feature type="binding site" evidence="1">
    <location>
        <begin position="240"/>
        <end position="242"/>
    </location>
    <ligand>
        <name>S-adenosyl-L-methionine</name>
        <dbReference type="ChEBI" id="CHEBI:59789"/>
    </ligand>
</feature>
<feature type="binding site" evidence="1">
    <location>
        <position position="317"/>
    </location>
    <ligand>
        <name>S-adenosyl-L-methionine</name>
        <dbReference type="ChEBI" id="CHEBI:59789"/>
    </ligand>
</feature>
<feature type="disulfide bond" description="(transient)" evidence="1">
    <location>
        <begin position="124"/>
        <end position="360"/>
    </location>
</feature>